<keyword id="KW-0997">Cell inner membrane</keyword>
<keyword id="KW-1003">Cell membrane</keyword>
<keyword id="KW-0472">Membrane</keyword>
<keyword id="KW-0520">NAD</keyword>
<keyword id="KW-0874">Quinone</keyword>
<keyword id="KW-1185">Reference proteome</keyword>
<keyword id="KW-1278">Translocase</keyword>
<keyword id="KW-0813">Transport</keyword>
<keyword id="KW-0830">Ubiquinone</keyword>
<name>NUOC_GEOMG</name>
<dbReference type="EC" id="7.1.1.-" evidence="1"/>
<dbReference type="EMBL" id="CP000148">
    <property type="protein sequence ID" value="ABB33565.1"/>
    <property type="molecule type" value="Genomic_DNA"/>
</dbReference>
<dbReference type="RefSeq" id="WP_004512579.1">
    <property type="nucleotide sequence ID" value="NC_007517.1"/>
</dbReference>
<dbReference type="SMR" id="Q39QA9"/>
<dbReference type="STRING" id="269799.Gmet_3353"/>
<dbReference type="KEGG" id="gme:Gmet_3353"/>
<dbReference type="eggNOG" id="COG0852">
    <property type="taxonomic scope" value="Bacteria"/>
</dbReference>
<dbReference type="HOGENOM" id="CLU_042628_6_0_7"/>
<dbReference type="Proteomes" id="UP000007073">
    <property type="component" value="Chromosome"/>
</dbReference>
<dbReference type="GO" id="GO:0005886">
    <property type="term" value="C:plasma membrane"/>
    <property type="evidence" value="ECO:0007669"/>
    <property type="project" value="UniProtKB-SubCell"/>
</dbReference>
<dbReference type="GO" id="GO:0008137">
    <property type="term" value="F:NADH dehydrogenase (ubiquinone) activity"/>
    <property type="evidence" value="ECO:0007669"/>
    <property type="project" value="InterPro"/>
</dbReference>
<dbReference type="GO" id="GO:0050136">
    <property type="term" value="F:NADH:ubiquinone reductase (non-electrogenic) activity"/>
    <property type="evidence" value="ECO:0007669"/>
    <property type="project" value="UniProtKB-UniRule"/>
</dbReference>
<dbReference type="GO" id="GO:0048038">
    <property type="term" value="F:quinone binding"/>
    <property type="evidence" value="ECO:0007669"/>
    <property type="project" value="UniProtKB-KW"/>
</dbReference>
<dbReference type="Gene3D" id="3.30.460.80">
    <property type="entry name" value="NADH:ubiquinone oxidoreductase, 30kDa subunit"/>
    <property type="match status" value="1"/>
</dbReference>
<dbReference type="HAMAP" id="MF_01357">
    <property type="entry name" value="NDH1_NuoC"/>
    <property type="match status" value="1"/>
</dbReference>
<dbReference type="InterPro" id="IPR010218">
    <property type="entry name" value="NADH_DH_suC"/>
</dbReference>
<dbReference type="InterPro" id="IPR037232">
    <property type="entry name" value="NADH_quin_OxRdtase_su_C/D-like"/>
</dbReference>
<dbReference type="InterPro" id="IPR001268">
    <property type="entry name" value="NADH_UbQ_OxRdtase_30kDa_su"/>
</dbReference>
<dbReference type="InterPro" id="IPR020396">
    <property type="entry name" value="NADH_UbQ_OxRdtase_CS"/>
</dbReference>
<dbReference type="NCBIfam" id="TIGR01961">
    <property type="entry name" value="NuoC_fam"/>
    <property type="match status" value="1"/>
</dbReference>
<dbReference type="PANTHER" id="PTHR10884:SF14">
    <property type="entry name" value="NADH DEHYDROGENASE [UBIQUINONE] IRON-SULFUR PROTEIN 3, MITOCHONDRIAL"/>
    <property type="match status" value="1"/>
</dbReference>
<dbReference type="PANTHER" id="PTHR10884">
    <property type="entry name" value="NADH DEHYDROGENASE UBIQUINONE IRON-SULFUR PROTEIN 3"/>
    <property type="match status" value="1"/>
</dbReference>
<dbReference type="Pfam" id="PF00329">
    <property type="entry name" value="Complex1_30kDa"/>
    <property type="match status" value="1"/>
</dbReference>
<dbReference type="SUPFAM" id="SSF143243">
    <property type="entry name" value="Nqo5-like"/>
    <property type="match status" value="1"/>
</dbReference>
<dbReference type="PROSITE" id="PS00542">
    <property type="entry name" value="COMPLEX1_30K"/>
    <property type="match status" value="1"/>
</dbReference>
<comment type="function">
    <text evidence="1">NDH-1 shuttles electrons from NADH, via FMN and iron-sulfur (Fe-S) centers, to quinones in the respiratory chain. The immediate electron acceptor for the enzyme in this species is believed to be ubiquinone. Couples the redox reaction to proton translocation (for every two electrons transferred, four hydrogen ions are translocated across the cytoplasmic membrane), and thus conserves the redox energy in a proton gradient.</text>
</comment>
<comment type="catalytic activity">
    <reaction evidence="1">
        <text>a quinone + NADH + 5 H(+)(in) = a quinol + NAD(+) + 4 H(+)(out)</text>
        <dbReference type="Rhea" id="RHEA:57888"/>
        <dbReference type="ChEBI" id="CHEBI:15378"/>
        <dbReference type="ChEBI" id="CHEBI:24646"/>
        <dbReference type="ChEBI" id="CHEBI:57540"/>
        <dbReference type="ChEBI" id="CHEBI:57945"/>
        <dbReference type="ChEBI" id="CHEBI:132124"/>
    </reaction>
</comment>
<comment type="subunit">
    <text evidence="1">NDH-1 is composed of 14 different subunits. Subunits NuoB, C, D, E, F, and G constitute the peripheral sector of the complex.</text>
</comment>
<comment type="subcellular location">
    <subcellularLocation>
        <location evidence="1">Cell inner membrane</location>
        <topology evidence="1">Peripheral membrane protein</topology>
        <orientation evidence="1">Cytoplasmic side</orientation>
    </subcellularLocation>
</comment>
<comment type="similarity">
    <text evidence="1">Belongs to the complex I 30 kDa subunit family.</text>
</comment>
<gene>
    <name evidence="1" type="primary">nuoC</name>
    <name type="ordered locus">Gmet_3353</name>
</gene>
<accession>Q39QA9</accession>
<protein>
    <recommendedName>
        <fullName evidence="1">NADH-quinone oxidoreductase subunit C</fullName>
        <ecNumber evidence="1">7.1.1.-</ecNumber>
    </recommendedName>
    <alternativeName>
        <fullName evidence="1">NADH dehydrogenase I subunit C</fullName>
    </alternativeName>
    <alternativeName>
        <fullName evidence="1">NDH-1 subunit C</fullName>
    </alternativeName>
</protein>
<proteinExistence type="inferred from homology"/>
<organism>
    <name type="scientific">Geobacter metallireducens (strain ATCC 53774 / DSM 7210 / GS-15)</name>
    <dbReference type="NCBI Taxonomy" id="269799"/>
    <lineage>
        <taxon>Bacteria</taxon>
        <taxon>Pseudomonadati</taxon>
        <taxon>Thermodesulfobacteriota</taxon>
        <taxon>Desulfuromonadia</taxon>
        <taxon>Geobacterales</taxon>
        <taxon>Geobacteraceae</taxon>
        <taxon>Geobacter</taxon>
    </lineage>
</organism>
<reference key="1">
    <citation type="journal article" date="2009" name="BMC Microbiol.">
        <title>The genome sequence of Geobacter metallireducens: features of metabolism, physiology and regulation common and dissimilar to Geobacter sulfurreducens.</title>
        <authorList>
            <person name="Aklujkar M."/>
            <person name="Krushkal J."/>
            <person name="DiBartolo G."/>
            <person name="Lapidus A."/>
            <person name="Land M.L."/>
            <person name="Lovley D.R."/>
        </authorList>
    </citation>
    <scope>NUCLEOTIDE SEQUENCE [LARGE SCALE GENOMIC DNA]</scope>
    <source>
        <strain>ATCC 53774 / DSM 7210 / GS-15</strain>
    </source>
</reference>
<evidence type="ECO:0000255" key="1">
    <source>
        <dbReference type="HAMAP-Rule" id="MF_01357"/>
    </source>
</evidence>
<feature type="chain" id="PRO_0000358106" description="NADH-quinone oxidoreductase subunit C">
    <location>
        <begin position="1"/>
        <end position="162"/>
    </location>
</feature>
<sequence length="162" mass="18515">MAETNRAVIKLREKFSASVLDVKEFRGEVTVTVKREDIVEICNFLKSSLAYNLCTDVTAVDYLGKQEPRFMVVYNLYSIPNKDRLRVKAGVPEAGCSIDTVSCVWSAANWLEREVYDLMGVVFNNHPDLRRILMTDDWVGHPLRKDYPLQGPGREPYKGRLS</sequence>